<comment type="function">
    <text evidence="1">Involved in the biosynthesis of the chorismate, which leads to the biosynthesis of aromatic amino acids. Catalyzes the reversible NADPH linked reduction of 3-dehydroshikimate (DHSA) to yield shikimate (SA).</text>
</comment>
<comment type="catalytic activity">
    <reaction evidence="1">
        <text>shikimate + NADP(+) = 3-dehydroshikimate + NADPH + H(+)</text>
        <dbReference type="Rhea" id="RHEA:17737"/>
        <dbReference type="ChEBI" id="CHEBI:15378"/>
        <dbReference type="ChEBI" id="CHEBI:16630"/>
        <dbReference type="ChEBI" id="CHEBI:36208"/>
        <dbReference type="ChEBI" id="CHEBI:57783"/>
        <dbReference type="ChEBI" id="CHEBI:58349"/>
        <dbReference type="EC" id="1.1.1.25"/>
    </reaction>
</comment>
<comment type="pathway">
    <text evidence="1">Metabolic intermediate biosynthesis; chorismate biosynthesis; chorismate from D-erythrose 4-phosphate and phosphoenolpyruvate: step 4/7.</text>
</comment>
<comment type="subunit">
    <text evidence="1">Homodimer.</text>
</comment>
<comment type="similarity">
    <text evidence="1">Belongs to the shikimate dehydrogenase family.</text>
</comment>
<feature type="chain" id="PRO_1000021286" description="Shikimate dehydrogenase (NADP(+))">
    <location>
        <begin position="1"/>
        <end position="286"/>
    </location>
</feature>
<feature type="active site" description="Proton acceptor" evidence="1">
    <location>
        <position position="71"/>
    </location>
</feature>
<feature type="binding site" evidence="1">
    <location>
        <begin position="20"/>
        <end position="22"/>
    </location>
    <ligand>
        <name>shikimate</name>
        <dbReference type="ChEBI" id="CHEBI:36208"/>
    </ligand>
</feature>
<feature type="binding site" evidence="1">
    <location>
        <position position="67"/>
    </location>
    <ligand>
        <name>shikimate</name>
        <dbReference type="ChEBI" id="CHEBI:36208"/>
    </ligand>
</feature>
<feature type="binding site" evidence="1">
    <location>
        <position position="92"/>
    </location>
    <ligand>
        <name>shikimate</name>
        <dbReference type="ChEBI" id="CHEBI:36208"/>
    </ligand>
</feature>
<feature type="binding site" evidence="1">
    <location>
        <position position="107"/>
    </location>
    <ligand>
        <name>shikimate</name>
        <dbReference type="ChEBI" id="CHEBI:36208"/>
    </ligand>
</feature>
<feature type="binding site" evidence="1">
    <location>
        <begin position="132"/>
        <end position="136"/>
    </location>
    <ligand>
        <name>NADP(+)</name>
        <dbReference type="ChEBI" id="CHEBI:58349"/>
    </ligand>
</feature>
<feature type="binding site" evidence="1">
    <location>
        <position position="228"/>
    </location>
    <ligand>
        <name>NADP(+)</name>
        <dbReference type="ChEBI" id="CHEBI:58349"/>
    </ligand>
</feature>
<feature type="binding site" evidence="1">
    <location>
        <position position="230"/>
    </location>
    <ligand>
        <name>shikimate</name>
        <dbReference type="ChEBI" id="CHEBI:36208"/>
    </ligand>
</feature>
<feature type="binding site" evidence="1">
    <location>
        <position position="251"/>
    </location>
    <ligand>
        <name>NADP(+)</name>
        <dbReference type="ChEBI" id="CHEBI:58349"/>
    </ligand>
</feature>
<evidence type="ECO:0000255" key="1">
    <source>
        <dbReference type="HAMAP-Rule" id="MF_00222"/>
    </source>
</evidence>
<gene>
    <name evidence="1" type="primary">aroE</name>
    <name type="ordered locus">GSU1490</name>
</gene>
<accession>Q74D29</accession>
<sequence>MPFTGATRVLGIIGQPVSHSLSPLMQNAALQAMGLDYAYVPFAVEEDCLADAVRGLAALGVVGFNVTIPHKSAILPLLDRLSPEAELIGAANVVKREGSDLVGYNTDGTGFIQSLSEDLGFTPAGCRILVMGAGGAARAAVASLAGAGAASVVIANRSIARGEELSAAFRRHFIGTQFAAIPLDPENLNRCVQNFDLLVNTSSVGMGGTAFPGMDLSRMGPHGAVYDMVYVPAVTPLLAEAERCGIRYANGIGMLAAQGECALELWTGVRPPEGLMKACLMAALMS</sequence>
<organism>
    <name type="scientific">Geobacter sulfurreducens (strain ATCC 51573 / DSM 12127 / PCA)</name>
    <dbReference type="NCBI Taxonomy" id="243231"/>
    <lineage>
        <taxon>Bacteria</taxon>
        <taxon>Pseudomonadati</taxon>
        <taxon>Thermodesulfobacteriota</taxon>
        <taxon>Desulfuromonadia</taxon>
        <taxon>Geobacterales</taxon>
        <taxon>Geobacteraceae</taxon>
        <taxon>Geobacter</taxon>
    </lineage>
</organism>
<reference key="1">
    <citation type="journal article" date="2003" name="Science">
        <title>Genome of Geobacter sulfurreducens: metal reduction in subsurface environments.</title>
        <authorList>
            <person name="Methe B.A."/>
            <person name="Nelson K.E."/>
            <person name="Eisen J.A."/>
            <person name="Paulsen I.T."/>
            <person name="Nelson W.C."/>
            <person name="Heidelberg J.F."/>
            <person name="Wu D."/>
            <person name="Wu M."/>
            <person name="Ward N.L."/>
            <person name="Beanan M.J."/>
            <person name="Dodson R.J."/>
            <person name="Madupu R."/>
            <person name="Brinkac L.M."/>
            <person name="Daugherty S.C."/>
            <person name="DeBoy R.T."/>
            <person name="Durkin A.S."/>
            <person name="Gwinn M.L."/>
            <person name="Kolonay J.F."/>
            <person name="Sullivan S.A."/>
            <person name="Haft D.H."/>
            <person name="Selengut J."/>
            <person name="Davidsen T.M."/>
            <person name="Zafar N."/>
            <person name="White O."/>
            <person name="Tran B."/>
            <person name="Romero C."/>
            <person name="Forberger H.A."/>
            <person name="Weidman J.F."/>
            <person name="Khouri H.M."/>
            <person name="Feldblyum T.V."/>
            <person name="Utterback T.R."/>
            <person name="Van Aken S.E."/>
            <person name="Lovley D.R."/>
            <person name="Fraser C.M."/>
        </authorList>
    </citation>
    <scope>NUCLEOTIDE SEQUENCE [LARGE SCALE GENOMIC DNA]</scope>
    <source>
        <strain>ATCC 51573 / DSM 12127 / PCA</strain>
    </source>
</reference>
<dbReference type="EC" id="1.1.1.25" evidence="1"/>
<dbReference type="EMBL" id="AE017180">
    <property type="protein sequence ID" value="AAR34864.1"/>
    <property type="molecule type" value="Genomic_DNA"/>
</dbReference>
<dbReference type="RefSeq" id="NP_952541.1">
    <property type="nucleotide sequence ID" value="NC_002939.5"/>
</dbReference>
<dbReference type="RefSeq" id="WP_010942136.1">
    <property type="nucleotide sequence ID" value="NC_002939.5"/>
</dbReference>
<dbReference type="SMR" id="Q74D29"/>
<dbReference type="FunCoup" id="Q74D29">
    <property type="interactions" value="183"/>
</dbReference>
<dbReference type="STRING" id="243231.GSU1490"/>
<dbReference type="EnsemblBacteria" id="AAR34864">
    <property type="protein sequence ID" value="AAR34864"/>
    <property type="gene ID" value="GSU1490"/>
</dbReference>
<dbReference type="KEGG" id="gsu:GSU1490"/>
<dbReference type="PATRIC" id="fig|243231.5.peg.1536"/>
<dbReference type="eggNOG" id="COG0169">
    <property type="taxonomic scope" value="Bacteria"/>
</dbReference>
<dbReference type="HOGENOM" id="CLU_044063_4_1_7"/>
<dbReference type="InParanoid" id="Q74D29"/>
<dbReference type="OrthoDB" id="9792692at2"/>
<dbReference type="UniPathway" id="UPA00053">
    <property type="reaction ID" value="UER00087"/>
</dbReference>
<dbReference type="Proteomes" id="UP000000577">
    <property type="component" value="Chromosome"/>
</dbReference>
<dbReference type="GO" id="GO:0005829">
    <property type="term" value="C:cytosol"/>
    <property type="evidence" value="ECO:0000318"/>
    <property type="project" value="GO_Central"/>
</dbReference>
<dbReference type="GO" id="GO:0050661">
    <property type="term" value="F:NADP binding"/>
    <property type="evidence" value="ECO:0000318"/>
    <property type="project" value="GO_Central"/>
</dbReference>
<dbReference type="GO" id="GO:0004764">
    <property type="term" value="F:shikimate 3-dehydrogenase (NADP+) activity"/>
    <property type="evidence" value="ECO:0000318"/>
    <property type="project" value="GO_Central"/>
</dbReference>
<dbReference type="GO" id="GO:0008652">
    <property type="term" value="P:amino acid biosynthetic process"/>
    <property type="evidence" value="ECO:0007669"/>
    <property type="project" value="UniProtKB-KW"/>
</dbReference>
<dbReference type="GO" id="GO:0009073">
    <property type="term" value="P:aromatic amino acid family biosynthetic process"/>
    <property type="evidence" value="ECO:0007669"/>
    <property type="project" value="UniProtKB-KW"/>
</dbReference>
<dbReference type="GO" id="GO:0009423">
    <property type="term" value="P:chorismate biosynthetic process"/>
    <property type="evidence" value="ECO:0000318"/>
    <property type="project" value="GO_Central"/>
</dbReference>
<dbReference type="GO" id="GO:0019632">
    <property type="term" value="P:shikimate metabolic process"/>
    <property type="evidence" value="ECO:0000318"/>
    <property type="project" value="GO_Central"/>
</dbReference>
<dbReference type="CDD" id="cd01065">
    <property type="entry name" value="NAD_bind_Shikimate_DH"/>
    <property type="match status" value="1"/>
</dbReference>
<dbReference type="Gene3D" id="3.40.50.10860">
    <property type="entry name" value="Leucine Dehydrogenase, chain A, domain 1"/>
    <property type="match status" value="1"/>
</dbReference>
<dbReference type="Gene3D" id="3.40.50.720">
    <property type="entry name" value="NAD(P)-binding Rossmann-like Domain"/>
    <property type="match status" value="1"/>
</dbReference>
<dbReference type="HAMAP" id="MF_00222">
    <property type="entry name" value="Shikimate_DH_AroE"/>
    <property type="match status" value="1"/>
</dbReference>
<dbReference type="InterPro" id="IPR046346">
    <property type="entry name" value="Aminoacid_DH-like_N_sf"/>
</dbReference>
<dbReference type="InterPro" id="IPR036291">
    <property type="entry name" value="NAD(P)-bd_dom_sf"/>
</dbReference>
<dbReference type="InterPro" id="IPR041121">
    <property type="entry name" value="SDH_C"/>
</dbReference>
<dbReference type="InterPro" id="IPR011342">
    <property type="entry name" value="Shikimate_DH"/>
</dbReference>
<dbReference type="InterPro" id="IPR013708">
    <property type="entry name" value="Shikimate_DH-bd_N"/>
</dbReference>
<dbReference type="InterPro" id="IPR022893">
    <property type="entry name" value="Shikimate_DH_fam"/>
</dbReference>
<dbReference type="InterPro" id="IPR006151">
    <property type="entry name" value="Shikm_DH/Glu-tRNA_Rdtase"/>
</dbReference>
<dbReference type="NCBIfam" id="TIGR00507">
    <property type="entry name" value="aroE"/>
    <property type="match status" value="1"/>
</dbReference>
<dbReference type="PANTHER" id="PTHR21089:SF1">
    <property type="entry name" value="BIFUNCTIONAL 3-DEHYDROQUINATE DEHYDRATASE_SHIKIMATE DEHYDROGENASE, CHLOROPLASTIC"/>
    <property type="match status" value="1"/>
</dbReference>
<dbReference type="PANTHER" id="PTHR21089">
    <property type="entry name" value="SHIKIMATE DEHYDROGENASE"/>
    <property type="match status" value="1"/>
</dbReference>
<dbReference type="Pfam" id="PF18317">
    <property type="entry name" value="SDH_C"/>
    <property type="match status" value="1"/>
</dbReference>
<dbReference type="Pfam" id="PF01488">
    <property type="entry name" value="Shikimate_DH"/>
    <property type="match status" value="1"/>
</dbReference>
<dbReference type="Pfam" id="PF08501">
    <property type="entry name" value="Shikimate_dh_N"/>
    <property type="match status" value="1"/>
</dbReference>
<dbReference type="SUPFAM" id="SSF53223">
    <property type="entry name" value="Aminoacid dehydrogenase-like, N-terminal domain"/>
    <property type="match status" value="1"/>
</dbReference>
<dbReference type="SUPFAM" id="SSF51735">
    <property type="entry name" value="NAD(P)-binding Rossmann-fold domains"/>
    <property type="match status" value="1"/>
</dbReference>
<keyword id="KW-0028">Amino-acid biosynthesis</keyword>
<keyword id="KW-0057">Aromatic amino acid biosynthesis</keyword>
<keyword id="KW-0521">NADP</keyword>
<keyword id="KW-0560">Oxidoreductase</keyword>
<keyword id="KW-1185">Reference proteome</keyword>
<protein>
    <recommendedName>
        <fullName evidence="1">Shikimate dehydrogenase (NADP(+))</fullName>
        <shortName evidence="1">SDH</shortName>
        <ecNumber evidence="1">1.1.1.25</ecNumber>
    </recommendedName>
</protein>
<proteinExistence type="inferred from homology"/>
<name>AROE_GEOSL</name>